<evidence type="ECO:0000255" key="1">
    <source>
        <dbReference type="HAMAP-Rule" id="MF_00322"/>
    </source>
</evidence>
<reference key="1">
    <citation type="journal article" date="2008" name="J. Bacteriol.">
        <title>The complete genome sequence of Thermococcus onnurineus NA1 reveals a mixed heterotrophic and carboxydotrophic metabolism.</title>
        <authorList>
            <person name="Lee H.S."/>
            <person name="Kang S.G."/>
            <person name="Bae S.S."/>
            <person name="Lim J.K."/>
            <person name="Cho Y."/>
            <person name="Kim Y.J."/>
            <person name="Jeon J.H."/>
            <person name="Cha S.-S."/>
            <person name="Kwon K.K."/>
            <person name="Kim H.-T."/>
            <person name="Park C.-J."/>
            <person name="Lee H.-W."/>
            <person name="Kim S.I."/>
            <person name="Chun J."/>
            <person name="Colwell R.R."/>
            <person name="Kim S.-J."/>
            <person name="Lee J.-H."/>
        </authorList>
    </citation>
    <scope>NUCLEOTIDE SEQUENCE [LARGE SCALE GENOMIC DNA]</scope>
    <source>
        <strain>NA1</strain>
    </source>
</reference>
<comment type="function">
    <text evidence="1">Relaxes both positive and negative superturns and exhibits a strong decatenase activity.</text>
</comment>
<comment type="catalytic activity">
    <reaction evidence="1">
        <text>ATP-dependent breakage, passage and rejoining of double-stranded DNA.</text>
        <dbReference type="EC" id="5.6.2.2"/>
    </reaction>
</comment>
<comment type="subunit">
    <text evidence="1">Homodimer. Heterotetramer of two Top6A and two Top6B chains.</text>
</comment>
<comment type="similarity">
    <text evidence="1">Belongs to the TOP6B family.</text>
</comment>
<feature type="chain" id="PRO_1000116021" description="Type 2 DNA topoisomerase 6 subunit B">
    <location>
        <begin position="1"/>
        <end position="563"/>
    </location>
</feature>
<feature type="binding site" evidence="1">
    <location>
        <position position="46"/>
    </location>
    <ligand>
        <name>ATP</name>
        <dbReference type="ChEBI" id="CHEBI:30616"/>
    </ligand>
</feature>
<feature type="binding site" evidence="1">
    <location>
        <position position="78"/>
    </location>
    <ligand>
        <name>ATP</name>
        <dbReference type="ChEBI" id="CHEBI:30616"/>
    </ligand>
</feature>
<feature type="binding site" evidence="1">
    <location>
        <begin position="99"/>
        <end position="100"/>
    </location>
    <ligand>
        <name>ATP</name>
        <dbReference type="ChEBI" id="CHEBI:30616"/>
    </ligand>
</feature>
<feature type="binding site" evidence="1">
    <location>
        <begin position="109"/>
        <end position="116"/>
    </location>
    <ligand>
        <name>ATP</name>
        <dbReference type="ChEBI" id="CHEBI:30616"/>
    </ligand>
</feature>
<feature type="binding site" evidence="1">
    <location>
        <position position="471"/>
    </location>
    <ligand>
        <name>ATP</name>
        <dbReference type="ChEBI" id="CHEBI:30616"/>
    </ligand>
</feature>
<proteinExistence type="inferred from homology"/>
<dbReference type="EC" id="5.6.2.2" evidence="1"/>
<dbReference type="EMBL" id="CP000855">
    <property type="protein sequence ID" value="ACJ16252.1"/>
    <property type="molecule type" value="Genomic_DNA"/>
</dbReference>
<dbReference type="RefSeq" id="WP_012571724.1">
    <property type="nucleotide sequence ID" value="NC_011529.1"/>
</dbReference>
<dbReference type="SMR" id="B6YVS9"/>
<dbReference type="STRING" id="523850.TON_0764"/>
<dbReference type="GeneID" id="7017067"/>
<dbReference type="KEGG" id="ton:TON_0764"/>
<dbReference type="PATRIC" id="fig|523850.10.peg.768"/>
<dbReference type="eggNOG" id="arCOG01165">
    <property type="taxonomic scope" value="Archaea"/>
</dbReference>
<dbReference type="HOGENOM" id="CLU_006403_0_0_2"/>
<dbReference type="OrthoDB" id="65493at2157"/>
<dbReference type="Proteomes" id="UP000002727">
    <property type="component" value="Chromosome"/>
</dbReference>
<dbReference type="GO" id="GO:0005524">
    <property type="term" value="F:ATP binding"/>
    <property type="evidence" value="ECO:0007669"/>
    <property type="project" value="UniProtKB-UniRule"/>
</dbReference>
<dbReference type="GO" id="GO:0003677">
    <property type="term" value="F:DNA binding"/>
    <property type="evidence" value="ECO:0007669"/>
    <property type="project" value="UniProtKB-UniRule"/>
</dbReference>
<dbReference type="GO" id="GO:0003918">
    <property type="term" value="F:DNA topoisomerase type II (double strand cut, ATP-hydrolyzing) activity"/>
    <property type="evidence" value="ECO:0007669"/>
    <property type="project" value="UniProtKB-UniRule"/>
</dbReference>
<dbReference type="GO" id="GO:0006265">
    <property type="term" value="P:DNA topological change"/>
    <property type="evidence" value="ECO:0007669"/>
    <property type="project" value="UniProtKB-UniRule"/>
</dbReference>
<dbReference type="CDD" id="cd16933">
    <property type="entry name" value="HATPase_TopVIB-like"/>
    <property type="match status" value="1"/>
</dbReference>
<dbReference type="CDD" id="cd00823">
    <property type="entry name" value="TopoIIB_Trans"/>
    <property type="match status" value="1"/>
</dbReference>
<dbReference type="FunFam" id="1.10.8.50:FF:000028">
    <property type="entry name" value="Type 2 DNA topoisomerase 6 subunit B"/>
    <property type="match status" value="1"/>
</dbReference>
<dbReference type="FunFam" id="3.30.230.10:FF:000202">
    <property type="entry name" value="Type 2 DNA topoisomerase 6 subunit B"/>
    <property type="match status" value="1"/>
</dbReference>
<dbReference type="FunFam" id="3.30.565.10:FF:000062">
    <property type="entry name" value="Type 2 DNA topoisomerase 6 subunit B"/>
    <property type="match status" value="1"/>
</dbReference>
<dbReference type="Gene3D" id="1.10.8.50">
    <property type="match status" value="1"/>
</dbReference>
<dbReference type="Gene3D" id="3.30.230.10">
    <property type="match status" value="1"/>
</dbReference>
<dbReference type="Gene3D" id="3.30.565.10">
    <property type="entry name" value="Histidine kinase-like ATPase, C-terminal domain"/>
    <property type="match status" value="1"/>
</dbReference>
<dbReference type="HAMAP" id="MF_00322">
    <property type="entry name" value="Top6B"/>
    <property type="match status" value="1"/>
</dbReference>
<dbReference type="InterPro" id="IPR036890">
    <property type="entry name" value="HATPase_C_sf"/>
</dbReference>
<dbReference type="InterPro" id="IPR020568">
    <property type="entry name" value="Ribosomal_Su5_D2-typ_SF"/>
</dbReference>
<dbReference type="InterPro" id="IPR014721">
    <property type="entry name" value="Ribsml_uS5_D2-typ_fold_subgr"/>
</dbReference>
<dbReference type="InterPro" id="IPR005734">
    <property type="entry name" value="TopoVI_B"/>
</dbReference>
<dbReference type="InterPro" id="IPR015320">
    <property type="entry name" value="TopoVI_B_transducer"/>
</dbReference>
<dbReference type="NCBIfam" id="NF003218">
    <property type="entry name" value="PRK04184.1"/>
    <property type="match status" value="1"/>
</dbReference>
<dbReference type="NCBIfam" id="TIGR01052">
    <property type="entry name" value="top6b"/>
    <property type="match status" value="1"/>
</dbReference>
<dbReference type="PANTHER" id="PTHR48444">
    <property type="entry name" value="DNA TOPOISOMERASE 6 SUBUNIT B"/>
    <property type="match status" value="1"/>
</dbReference>
<dbReference type="PANTHER" id="PTHR48444:SF1">
    <property type="entry name" value="DNA TOPOISOMERASE 6 SUBUNIT B"/>
    <property type="match status" value="1"/>
</dbReference>
<dbReference type="Pfam" id="PF02518">
    <property type="entry name" value="HATPase_c"/>
    <property type="match status" value="1"/>
</dbReference>
<dbReference type="Pfam" id="PF09239">
    <property type="entry name" value="Topo-VIb_trans"/>
    <property type="match status" value="1"/>
</dbReference>
<dbReference type="PIRSF" id="PIRSF006553">
    <property type="entry name" value="TopoVI_B"/>
    <property type="match status" value="1"/>
</dbReference>
<dbReference type="SMART" id="SM00387">
    <property type="entry name" value="HATPase_c"/>
    <property type="match status" value="1"/>
</dbReference>
<dbReference type="SUPFAM" id="SSF55874">
    <property type="entry name" value="ATPase domain of HSP90 chaperone/DNA topoisomerase II/histidine kinase"/>
    <property type="match status" value="1"/>
</dbReference>
<dbReference type="SUPFAM" id="SSF54211">
    <property type="entry name" value="Ribosomal protein S5 domain 2-like"/>
    <property type="match status" value="1"/>
</dbReference>
<gene>
    <name evidence="1" type="primary">top6B</name>
    <name type="ordered locus">TON_0764</name>
</gene>
<organism>
    <name type="scientific">Thermococcus onnurineus (strain NA1)</name>
    <dbReference type="NCBI Taxonomy" id="523850"/>
    <lineage>
        <taxon>Archaea</taxon>
        <taxon>Methanobacteriati</taxon>
        <taxon>Methanobacteriota</taxon>
        <taxon>Thermococci</taxon>
        <taxon>Thermococcales</taxon>
        <taxon>Thermococcaceae</taxon>
        <taxon>Thermococcus</taxon>
    </lineage>
</organism>
<keyword id="KW-0067">ATP-binding</keyword>
<keyword id="KW-0238">DNA-binding</keyword>
<keyword id="KW-0413">Isomerase</keyword>
<keyword id="KW-0547">Nucleotide-binding</keyword>
<keyword id="KW-0799">Topoisomerase</keyword>
<protein>
    <recommendedName>
        <fullName evidence="1">Type 2 DNA topoisomerase 6 subunit B</fullName>
        <ecNumber evidence="1">5.6.2.2</ecNumber>
    </recommendedName>
    <alternativeName>
        <fullName evidence="1">Type II DNA topoisomerase VI subunit B</fullName>
        <shortName evidence="1">TopoVI-B</shortName>
    </alternativeName>
</protein>
<sequence>MAEASQLFKEFKIQSVSEFFRRNAAMLGYTGKIRSLTTVVHEAVTNSLDACEEAGILPYVRVEIEELGREHYKVIVEDNGPGIPEKFITHVFGKMLAGTKAHRNIQSRGQQGIGISGAVMFAQITSGKATRVITSTGGDIIEAWVKIDVDKNEGKIVKKERHPNPKGWRGTRIELEVKNVRYVRSKQGVYWYLKLTAIANPHAHIELIEPDGKLIVFPRSSEEVPKPPVEMKPHPKGVLTDDVYRMAKKTRRNTVRRFLIGEFSRISDKKVDELIKYIAALRLIKTEKDKAVQDQLYERLMNGEVDKVLRSFKGYTKVVKQVAKLMEKPPEKLSWHEAEEIVEAFKYMKFLAPPTHGLRPIGEENIEKGLKGILKPEFVTAVTRPPKVYSGGIPFQVEVGLAYGGEISSGFDLLRYANRVPLLFDAGSCVTTLAARSIDWKRYKVDDLERAPVVLMINVISVHVPYTGTGKQSIANVDEIHNEIRLAIMDAARRLQTYLSGKHRRLYQVKRKKTFEKYVPEIAKALSILTGEPEEEVKNYFLRFIEERFAQSEVEAEEVAENA</sequence>
<accession>B6YVS9</accession>
<name>TOP6B_THEON</name>